<reference key="1">
    <citation type="journal article" date="2000" name="Proc. Natl. Acad. Sci. U.S.A.">
        <title>Genome sequence of Halobacterium species NRC-1.</title>
        <authorList>
            <person name="Ng W.V."/>
            <person name="Kennedy S.P."/>
            <person name="Mahairas G.G."/>
            <person name="Berquist B."/>
            <person name="Pan M."/>
            <person name="Shukla H.D."/>
            <person name="Lasky S.R."/>
            <person name="Baliga N.S."/>
            <person name="Thorsson V."/>
            <person name="Sbrogna J."/>
            <person name="Swartzell S."/>
            <person name="Weir D."/>
            <person name="Hall J."/>
            <person name="Dahl T.A."/>
            <person name="Welti R."/>
            <person name="Goo Y.A."/>
            <person name="Leithauser B."/>
            <person name="Keller K."/>
            <person name="Cruz R."/>
            <person name="Danson M.J."/>
            <person name="Hough D.W."/>
            <person name="Maddocks D.G."/>
            <person name="Jablonski P.E."/>
            <person name="Krebs M.P."/>
            <person name="Angevine C.M."/>
            <person name="Dale H."/>
            <person name="Isenbarger T.A."/>
            <person name="Peck R.F."/>
            <person name="Pohlschroder M."/>
            <person name="Spudich J.L."/>
            <person name="Jung K.-H."/>
            <person name="Alam M."/>
            <person name="Freitas T."/>
            <person name="Hou S."/>
            <person name="Daniels C.J."/>
            <person name="Dennis P.P."/>
            <person name="Omer A.D."/>
            <person name="Ebhardt H."/>
            <person name="Lowe T.M."/>
            <person name="Liang P."/>
            <person name="Riley M."/>
            <person name="Hood L."/>
            <person name="DasSarma S."/>
        </authorList>
    </citation>
    <scope>NUCLEOTIDE SEQUENCE [LARGE SCALE GENOMIC DNA]</scope>
    <source>
        <strain>ATCC 700922 / JCM 11081 / NRC-1</strain>
    </source>
</reference>
<evidence type="ECO:0000255" key="1">
    <source>
        <dbReference type="HAMAP-Rule" id="MF_00188"/>
    </source>
</evidence>
<evidence type="ECO:0000256" key="2">
    <source>
        <dbReference type="SAM" id="MobiDB-lite"/>
    </source>
</evidence>
<name>HTPX_HALSA</name>
<sequence>MAIVGTILFAFYSVAIAAAWFFFGQNQTILAIAIVGSVVLVGVQYKVGKWMALRSVGAEDMDEQEFPRIHRRVESLSRDMGIKKPTLKVANMGVPNAFAVGRKGNGTVVVSRELIDILEHEELDGVLAHELSHIANRDVVTMQLGQGIASIVGIVAQYIVLFSGDNDLADFFLAIVVGNLVQFLVTLFVLAISRYREYVADADARRAIGTGEPLARALEKISQGNEQAAQQQRQRTSRGRGRRQRGQRNDDGLDQQVSALCISSPDTSVLQKLVSTHPPTEKRIQRLRS</sequence>
<proteinExistence type="inferred from homology"/>
<protein>
    <recommendedName>
        <fullName evidence="1">Protease HtpX homolog</fullName>
        <ecNumber evidence="1">3.4.24.-</ecNumber>
    </recommendedName>
</protein>
<organism>
    <name type="scientific">Halobacterium salinarum (strain ATCC 700922 / JCM 11081 / NRC-1)</name>
    <name type="common">Halobacterium halobium</name>
    <dbReference type="NCBI Taxonomy" id="64091"/>
    <lineage>
        <taxon>Archaea</taxon>
        <taxon>Methanobacteriati</taxon>
        <taxon>Methanobacteriota</taxon>
        <taxon>Stenosarchaea group</taxon>
        <taxon>Halobacteria</taxon>
        <taxon>Halobacteriales</taxon>
        <taxon>Halobacteriaceae</taxon>
        <taxon>Halobacterium</taxon>
        <taxon>Halobacterium salinarum NRC-34001</taxon>
    </lineage>
</organism>
<accession>Q9HSQ2</accession>
<keyword id="KW-1003">Cell membrane</keyword>
<keyword id="KW-0378">Hydrolase</keyword>
<keyword id="KW-0472">Membrane</keyword>
<keyword id="KW-0479">Metal-binding</keyword>
<keyword id="KW-0482">Metalloprotease</keyword>
<keyword id="KW-0645">Protease</keyword>
<keyword id="KW-1185">Reference proteome</keyword>
<keyword id="KW-0812">Transmembrane</keyword>
<keyword id="KW-1133">Transmembrane helix</keyword>
<keyword id="KW-0862">Zinc</keyword>
<comment type="cofactor">
    <cofactor evidence="1">
        <name>Zn(2+)</name>
        <dbReference type="ChEBI" id="CHEBI:29105"/>
    </cofactor>
    <text evidence="1">Binds 1 zinc ion per subunit.</text>
</comment>
<comment type="subcellular location">
    <subcellularLocation>
        <location evidence="1">Cell membrane</location>
        <topology evidence="1">Multi-pass membrane protein</topology>
    </subcellularLocation>
</comment>
<comment type="similarity">
    <text evidence="1">Belongs to the peptidase M48B family.</text>
</comment>
<dbReference type="EC" id="3.4.24.-" evidence="1"/>
<dbReference type="EMBL" id="AE004437">
    <property type="protein sequence ID" value="AAG18751.1"/>
    <property type="molecule type" value="Genomic_DNA"/>
</dbReference>
<dbReference type="PIR" id="C84173">
    <property type="entry name" value="C84173"/>
</dbReference>
<dbReference type="RefSeq" id="WP_010902046.1">
    <property type="nucleotide sequence ID" value="NC_002607.1"/>
</dbReference>
<dbReference type="FunCoup" id="Q9HSQ2">
    <property type="interactions" value="2"/>
</dbReference>
<dbReference type="STRING" id="64091.VNG_0129G"/>
<dbReference type="PaxDb" id="64091-VNG_0129G"/>
<dbReference type="KEGG" id="hal:VNG_0129G"/>
<dbReference type="PATRIC" id="fig|64091.14.peg.88"/>
<dbReference type="HOGENOM" id="CLU_042266_0_2_2"/>
<dbReference type="InParanoid" id="Q9HSQ2"/>
<dbReference type="Proteomes" id="UP000000554">
    <property type="component" value="Chromosome"/>
</dbReference>
<dbReference type="GO" id="GO:0005886">
    <property type="term" value="C:plasma membrane"/>
    <property type="evidence" value="ECO:0007669"/>
    <property type="project" value="UniProtKB-SubCell"/>
</dbReference>
<dbReference type="GO" id="GO:0004222">
    <property type="term" value="F:metalloendopeptidase activity"/>
    <property type="evidence" value="ECO:0007669"/>
    <property type="project" value="UniProtKB-UniRule"/>
</dbReference>
<dbReference type="GO" id="GO:0008270">
    <property type="term" value="F:zinc ion binding"/>
    <property type="evidence" value="ECO:0007669"/>
    <property type="project" value="UniProtKB-UniRule"/>
</dbReference>
<dbReference type="GO" id="GO:0006508">
    <property type="term" value="P:proteolysis"/>
    <property type="evidence" value="ECO:0007669"/>
    <property type="project" value="UniProtKB-KW"/>
</dbReference>
<dbReference type="Gene3D" id="3.30.2010.10">
    <property type="entry name" value="Metalloproteases ('zincins'), catalytic domain"/>
    <property type="match status" value="1"/>
</dbReference>
<dbReference type="HAMAP" id="MF_00188">
    <property type="entry name" value="Pept_M48_protease_HtpX"/>
    <property type="match status" value="1"/>
</dbReference>
<dbReference type="InterPro" id="IPR050083">
    <property type="entry name" value="HtpX_protease"/>
</dbReference>
<dbReference type="InterPro" id="IPR022919">
    <property type="entry name" value="Pept_M48_protease_HtpX"/>
</dbReference>
<dbReference type="InterPro" id="IPR001915">
    <property type="entry name" value="Peptidase_M48"/>
</dbReference>
<dbReference type="PANTHER" id="PTHR43221">
    <property type="entry name" value="PROTEASE HTPX"/>
    <property type="match status" value="1"/>
</dbReference>
<dbReference type="PANTHER" id="PTHR43221:SF2">
    <property type="entry name" value="PROTEASE HTPX HOMOLOG"/>
    <property type="match status" value="1"/>
</dbReference>
<dbReference type="Pfam" id="PF01435">
    <property type="entry name" value="Peptidase_M48"/>
    <property type="match status" value="1"/>
</dbReference>
<gene>
    <name evidence="1" type="primary">htpX</name>
    <name type="synonym">hsp4</name>
    <name type="ordered locus">VNG_0129G</name>
</gene>
<feature type="chain" id="PRO_0000138914" description="Protease HtpX homolog">
    <location>
        <begin position="1"/>
        <end position="289"/>
    </location>
</feature>
<feature type="transmembrane region" description="Helical" evidence="1">
    <location>
        <begin position="3"/>
        <end position="23"/>
    </location>
</feature>
<feature type="transmembrane region" description="Helical" evidence="1">
    <location>
        <begin position="28"/>
        <end position="48"/>
    </location>
</feature>
<feature type="transmembrane region" description="Helical" evidence="1">
    <location>
        <begin position="144"/>
        <end position="164"/>
    </location>
</feature>
<feature type="transmembrane region" description="Helical" evidence="1">
    <location>
        <begin position="172"/>
        <end position="192"/>
    </location>
</feature>
<feature type="region of interest" description="Disordered" evidence="2">
    <location>
        <begin position="222"/>
        <end position="250"/>
    </location>
</feature>
<feature type="compositionally biased region" description="Basic residues" evidence="2">
    <location>
        <begin position="235"/>
        <end position="246"/>
    </location>
</feature>
<feature type="active site" evidence="1">
    <location>
        <position position="130"/>
    </location>
</feature>
<feature type="binding site" evidence="1">
    <location>
        <position position="129"/>
    </location>
    <ligand>
        <name>Zn(2+)</name>
        <dbReference type="ChEBI" id="CHEBI:29105"/>
        <note>catalytic</note>
    </ligand>
</feature>
<feature type="binding site" evidence="1">
    <location>
        <position position="133"/>
    </location>
    <ligand>
        <name>Zn(2+)</name>
        <dbReference type="ChEBI" id="CHEBI:29105"/>
        <note>catalytic</note>
    </ligand>
</feature>
<feature type="binding site" evidence="1">
    <location>
        <position position="197"/>
    </location>
    <ligand>
        <name>Zn(2+)</name>
        <dbReference type="ChEBI" id="CHEBI:29105"/>
        <note>catalytic</note>
    </ligand>
</feature>